<feature type="chain" id="PRO_0000216222" description="Uncharacterized protein in bglA 3'region">
    <location>
        <begin position="1"/>
        <end position="98" status="greater than"/>
    </location>
</feature>
<feature type="non-terminal residue">
    <location>
        <position position="98"/>
    </location>
</feature>
<name>YBGA_THEMA</name>
<sequence>MKKYFVLLLAVLLVGGLFAVKITMTSGGVGKELEVLKKQLEMFHQQYPDIEVEIIPMPDSSTERHDLYVTYFAAGETDPDVLMLDVIWPAEFAPFLED</sequence>
<protein>
    <recommendedName>
        <fullName>Uncharacterized protein in bglA 3'region</fullName>
    </recommendedName>
    <alternativeName>
        <fullName>ORF2</fullName>
    </alternativeName>
</protein>
<evidence type="ECO:0000305" key="1"/>
<dbReference type="EMBL" id="X74163">
    <property type="protein sequence ID" value="CAA52277.1"/>
    <property type="molecule type" value="Genomic_DNA"/>
</dbReference>
<dbReference type="PIR" id="S41562">
    <property type="entry name" value="S41562"/>
</dbReference>
<dbReference type="SMR" id="Q08640"/>
<dbReference type="PaxDb" id="243274-THEMA_04940"/>
<dbReference type="eggNOG" id="COG1653">
    <property type="taxonomic scope" value="Bacteria"/>
</dbReference>
<dbReference type="Gene3D" id="3.40.190.10">
    <property type="entry name" value="Periplasmic binding protein-like II"/>
    <property type="match status" value="1"/>
</dbReference>
<dbReference type="SUPFAM" id="SSF53850">
    <property type="entry name" value="Periplasmic binding protein-like II"/>
    <property type="match status" value="1"/>
</dbReference>
<reference key="1">
    <citation type="journal article" date="1994" name="Mol. Gen. Genet.">
        <title>Comparative amino acid sequence analysis of Thermotoga maritima beta-glucosidase (BglA) deduced from the nucleotide sequence of the gene indicates distant relationship between beta-glucosidases of the BGA family and other families of beta-1,4-glycosyl hydrolases.</title>
        <authorList>
            <person name="Liebl W."/>
            <person name="Gabelsberger J."/>
            <person name="Schleifer K.H."/>
        </authorList>
    </citation>
    <scope>NUCLEOTIDE SEQUENCE [GENOMIC DNA]</scope>
    <source>
        <strain>ATCC 43589 / DSM 3109 / JCM 10099 / NBRC 100826 / MSB8</strain>
    </source>
</reference>
<comment type="caution">
    <text evidence="1">As the DNA coding for this protein is not found in the complete genome of T.maritima. It could have originated from another bacterial species.</text>
</comment>
<accession>Q08640</accession>
<organism>
    <name type="scientific">Thermotoga maritima (strain ATCC 43589 / DSM 3109 / JCM 10099 / NBRC 100826 / MSB8)</name>
    <dbReference type="NCBI Taxonomy" id="243274"/>
    <lineage>
        <taxon>Bacteria</taxon>
        <taxon>Thermotogati</taxon>
        <taxon>Thermotogota</taxon>
        <taxon>Thermotogae</taxon>
        <taxon>Thermotogales</taxon>
        <taxon>Thermotogaceae</taxon>
        <taxon>Thermotoga</taxon>
    </lineage>
</organism>
<proteinExistence type="predicted"/>